<organism>
    <name type="scientific">Saccharomyces cerevisiae (strain ATCC 204508 / S288c)</name>
    <name type="common">Baker's yeast</name>
    <dbReference type="NCBI Taxonomy" id="559292"/>
    <lineage>
        <taxon>Eukaryota</taxon>
        <taxon>Fungi</taxon>
        <taxon>Dikarya</taxon>
        <taxon>Ascomycota</taxon>
        <taxon>Saccharomycotina</taxon>
        <taxon>Saccharomycetes</taxon>
        <taxon>Saccharomycetales</taxon>
        <taxon>Saccharomycetaceae</taxon>
        <taxon>Saccharomyces</taxon>
    </lineage>
</organism>
<proteinExistence type="evidence at protein level"/>
<evidence type="ECO:0000256" key="1">
    <source>
        <dbReference type="SAM" id="MobiDB-lite"/>
    </source>
</evidence>
<evidence type="ECO:0000269" key="2">
    <source>
    </source>
</evidence>
<evidence type="ECO:0000269" key="3">
    <source>
    </source>
</evidence>
<evidence type="ECO:0000269" key="4">
    <source>
    </source>
</evidence>
<evidence type="ECO:0000269" key="5">
    <source>
    </source>
</evidence>
<evidence type="ECO:0007744" key="6">
    <source>
    </source>
</evidence>
<evidence type="ECO:0007744" key="7">
    <source>
    </source>
</evidence>
<comment type="function">
    <text evidence="4">Negative regulator of the transcriptional complex INO2-INO4 in response to phospholipid precursor availability. When precursors become limiting, OPI1 is retained at the endoplasmic reticulum (ER) and INO2-INO4 activates INO1 and other genes required for phospholipid biosynthesis, whereas abundant precursor availability results in targeting of OPI1 to the nucleus to repress transcription of these genes. Binds directly to phosphatidic acid, which is required for ER targeting and may act as sensing mechanism for precursor availability, as phosphatidic acid becomes rapidly depleted upon phospholipid biosynthesis.</text>
</comment>
<comment type="subunit">
    <text evidence="2 5">Interacts with SCS2.</text>
</comment>
<comment type="interaction">
    <interactant intactId="EBI-12555">
        <id>P21957</id>
    </interactant>
    <interactant intactId="EBI-16735">
        <id>P40075</id>
        <label>SCS2</label>
    </interactant>
    <organismsDiffer>false</organismsDiffer>
    <experiments>4</experiments>
</comment>
<comment type="interaction">
    <interactant intactId="EBI-12555">
        <id>P21957</id>
    </interactant>
    <interactant intactId="EBI-17160">
        <id>P22579</id>
        <label>SIN3</label>
    </interactant>
    <organismsDiffer>false</organismsDiffer>
    <experiments>6</experiments>
</comment>
<comment type="subcellular location">
    <subcellularLocation>
        <location evidence="2 4">Endoplasmic reticulum</location>
    </subcellularLocation>
    <subcellularLocation>
        <location evidence="4">Nucleus</location>
    </subcellularLocation>
    <text>Maintained at the endoplasmic reticulum by SCS2 (PubMed:12727870). In response to elevated inositol levels, translocates to the nucleus (PubMed:15192221).</text>
</comment>
<comment type="domain">
    <text evidence="2">The FFAT motif is required for interaction with SCS2 and proper localization of the protein.</text>
</comment>
<comment type="miscellaneous">
    <text evidence="3">Present with 1281 molecules/cell in log phase SD medium.</text>
</comment>
<protein>
    <recommendedName>
        <fullName>Transcriptional repressor OPI1</fullName>
    </recommendedName>
    <alternativeName>
        <fullName>Negative regulator of phospholipid biosynthesis</fullName>
    </alternativeName>
    <alternativeName>
        <fullName>Overproducer of inositol protein 1</fullName>
    </alternativeName>
</protein>
<name>OPI1_YEAST</name>
<reference key="1">
    <citation type="journal article" date="1991" name="J. Biol. Chem.">
        <title>The OPI1 gene of Saccharomyces cerevisiae, a negative regulator of phospholipid biosynthesis, encodes a protein containing polyglutamine tracts and a leucine zipper.</title>
        <authorList>
            <person name="White M.J."/>
            <person name="Hirsch J.P."/>
            <person name="Henry S.A."/>
        </authorList>
    </citation>
    <scope>NUCLEOTIDE SEQUENCE [GENOMIC DNA]</scope>
</reference>
<reference key="2">
    <citation type="journal article" date="1994" name="Science">
        <title>Complete nucleotide sequence of Saccharomyces cerevisiae chromosome VIII.</title>
        <authorList>
            <person name="Johnston M."/>
            <person name="Andrews S."/>
            <person name="Brinkman R."/>
            <person name="Cooper J."/>
            <person name="Ding H."/>
            <person name="Dover J."/>
            <person name="Du Z."/>
            <person name="Favello A."/>
            <person name="Fulton L."/>
            <person name="Gattung S."/>
            <person name="Geisel C."/>
            <person name="Kirsten J."/>
            <person name="Kucaba T."/>
            <person name="Hillier L.W."/>
            <person name="Jier M."/>
            <person name="Johnston L."/>
            <person name="Langston Y."/>
            <person name="Latreille P."/>
            <person name="Louis E.J."/>
            <person name="Macri C."/>
            <person name="Mardis E."/>
            <person name="Menezes S."/>
            <person name="Mouser L."/>
            <person name="Nhan M."/>
            <person name="Rifkin L."/>
            <person name="Riles L."/>
            <person name="St Peter H."/>
            <person name="Trevaskis E."/>
            <person name="Vaughan K."/>
            <person name="Vignati D."/>
            <person name="Wilcox L."/>
            <person name="Wohldman P."/>
            <person name="Waterston R."/>
            <person name="Wilson R."/>
            <person name="Vaudin M."/>
        </authorList>
    </citation>
    <scope>NUCLEOTIDE SEQUENCE [LARGE SCALE GENOMIC DNA]</scope>
    <source>
        <strain>ATCC 204508 / S288c</strain>
    </source>
</reference>
<reference key="3">
    <citation type="journal article" date="2014" name="G3 (Bethesda)">
        <title>The reference genome sequence of Saccharomyces cerevisiae: Then and now.</title>
        <authorList>
            <person name="Engel S.R."/>
            <person name="Dietrich F.S."/>
            <person name="Fisk D.G."/>
            <person name="Binkley G."/>
            <person name="Balakrishnan R."/>
            <person name="Costanzo M.C."/>
            <person name="Dwight S.S."/>
            <person name="Hitz B.C."/>
            <person name="Karra K."/>
            <person name="Nash R.S."/>
            <person name="Weng S."/>
            <person name="Wong E.D."/>
            <person name="Lloyd P."/>
            <person name="Skrzypek M.S."/>
            <person name="Miyasato S.R."/>
            <person name="Simison M."/>
            <person name="Cherry J.M."/>
        </authorList>
    </citation>
    <scope>GENOME REANNOTATION</scope>
    <source>
        <strain>ATCC 204508 / S288c</strain>
    </source>
</reference>
<reference key="4">
    <citation type="journal article" date="2007" name="Genome Res.">
        <title>Approaching a complete repository of sequence-verified protein-encoding clones for Saccharomyces cerevisiae.</title>
        <authorList>
            <person name="Hu Y."/>
            <person name="Rolfs A."/>
            <person name="Bhullar B."/>
            <person name="Murthy T.V.S."/>
            <person name="Zhu C."/>
            <person name="Berger M.F."/>
            <person name="Camargo A.A."/>
            <person name="Kelley F."/>
            <person name="McCarron S."/>
            <person name="Jepson D."/>
            <person name="Richardson A."/>
            <person name="Raphael J."/>
            <person name="Moreira D."/>
            <person name="Taycher E."/>
            <person name="Zuo D."/>
            <person name="Mohr S."/>
            <person name="Kane M.F."/>
            <person name="Williamson J."/>
            <person name="Simpson A.J.G."/>
            <person name="Bulyk M.L."/>
            <person name="Harlow E."/>
            <person name="Marsischky G."/>
            <person name="Kolodner R.D."/>
            <person name="LaBaer J."/>
        </authorList>
    </citation>
    <scope>NUCLEOTIDE SEQUENCE [GENOMIC DNA]</scope>
    <source>
        <strain>ATCC 204508 / S288c</strain>
    </source>
</reference>
<reference key="5">
    <citation type="journal article" date="2003" name="EMBO J.">
        <title>A conserved ER targeting motif in three families of lipid binding proteins and in Opi1p binds VAP.</title>
        <authorList>
            <person name="Loewen C.J.R."/>
            <person name="Roy A."/>
            <person name="Levine T.P."/>
        </authorList>
    </citation>
    <scope>DOMAIN FFAT MOTIF</scope>
    <scope>INTERACTION WITH SCS2</scope>
    <scope>SUBCELLULAR LOCATION</scope>
</reference>
<reference key="6">
    <citation type="journal article" date="2003" name="Nature">
        <title>Global analysis of protein localization in budding yeast.</title>
        <authorList>
            <person name="Huh W.-K."/>
            <person name="Falvo J.V."/>
            <person name="Gerke L.C."/>
            <person name="Carroll A.S."/>
            <person name="Howson R.W."/>
            <person name="Weissman J.S."/>
            <person name="O'Shea E.K."/>
        </authorList>
    </citation>
    <scope>SUBCELLULAR LOCATION [LARGE SCALE ANALYSIS]</scope>
</reference>
<reference key="7">
    <citation type="journal article" date="2003" name="Nature">
        <title>Global analysis of protein expression in yeast.</title>
        <authorList>
            <person name="Ghaemmaghami S."/>
            <person name="Huh W.-K."/>
            <person name="Bower K."/>
            <person name="Howson R.W."/>
            <person name="Belle A."/>
            <person name="Dephoure N."/>
            <person name="O'Shea E.K."/>
            <person name="Weissman J.S."/>
        </authorList>
    </citation>
    <scope>LEVEL OF PROTEIN EXPRESSION [LARGE SCALE ANALYSIS]</scope>
</reference>
<reference key="8">
    <citation type="journal article" date="2004" name="PLoS Biol.">
        <title>Gene recruitment of the activated INO1 locus to the nuclear membrane.</title>
        <authorList>
            <person name="Brickner J.H."/>
            <person name="Walter P."/>
        </authorList>
    </citation>
    <scope>INTERACTION WITH SCS2</scope>
</reference>
<reference key="9">
    <citation type="journal article" date="2004" name="Science">
        <title>Phospholipid metabolism regulated by a transcription factor sensing phosphatidic acid.</title>
        <authorList>
            <person name="Loewen C.J.R."/>
            <person name="Gaspar M.L."/>
            <person name="Jesch S.A."/>
            <person name="Delon C."/>
            <person name="Ktistakis N.T."/>
            <person name="Henry S.A."/>
            <person name="Levine T.P."/>
        </authorList>
    </citation>
    <scope>FUNCTION</scope>
    <scope>PHOSPHATIDIC ACID-BINDING</scope>
    <scope>SUBCELLULAR LOCATION</scope>
</reference>
<reference key="10">
    <citation type="journal article" date="2007" name="J. Proteome Res.">
        <title>Large-scale phosphorylation analysis of alpha-factor-arrested Saccharomyces cerevisiae.</title>
        <authorList>
            <person name="Li X."/>
            <person name="Gerber S.A."/>
            <person name="Rudner A.D."/>
            <person name="Beausoleil S.A."/>
            <person name="Haas W."/>
            <person name="Villen J."/>
            <person name="Elias J.E."/>
            <person name="Gygi S.P."/>
        </authorList>
    </citation>
    <scope>PHOSPHORYLATION [LARGE SCALE ANALYSIS] AT SER-10</scope>
    <scope>IDENTIFICATION BY MASS SPECTROMETRY [LARGE SCALE ANALYSIS]</scope>
    <source>
        <strain>ADR376</strain>
    </source>
</reference>
<reference key="11">
    <citation type="journal article" date="2009" name="Science">
        <title>Global analysis of Cdk1 substrate phosphorylation sites provides insights into evolution.</title>
        <authorList>
            <person name="Holt L.J."/>
            <person name="Tuch B.B."/>
            <person name="Villen J."/>
            <person name="Johnson A.D."/>
            <person name="Gygi S.P."/>
            <person name="Morgan D.O."/>
        </authorList>
    </citation>
    <scope>PHOSPHORYLATION [LARGE SCALE ANALYSIS] AT SER-10</scope>
    <scope>IDENTIFICATION BY MASS SPECTROMETRY [LARGE SCALE ANALYSIS]</scope>
</reference>
<keyword id="KW-0238">DNA-binding</keyword>
<keyword id="KW-0256">Endoplasmic reticulum</keyword>
<keyword id="KW-0444">Lipid biosynthesis</keyword>
<keyword id="KW-0443">Lipid metabolism</keyword>
<keyword id="KW-0539">Nucleus</keyword>
<keyword id="KW-0594">Phospholipid biosynthesis</keyword>
<keyword id="KW-1208">Phospholipid metabolism</keyword>
<keyword id="KW-0597">Phosphoprotein</keyword>
<keyword id="KW-1185">Reference proteome</keyword>
<keyword id="KW-0678">Repressor</keyword>
<keyword id="KW-0804">Transcription</keyword>
<keyword id="KW-0805">Transcription regulation</keyword>
<sequence length="404" mass="46065">MSENQRLGLSEEEVEAAEVLGVLKQSCRQKSQPSEDVSQADKMPASESSTTPLNILDRVSNKIISNVVTFYDEINTNKRPLKSIGRLLDDDDDEHDDYDYNDDEFFTNKRQKLSRAIAKGKDNLKEYKLNMSIESKKRLVTCLHLLKLANKQLSDKISCLQDLVEKEQVHPLHKQDGNARTTTGAGEDETSSDEDDDDEEFFDASEQVNASEQSIVVKMEVVGTVKKVYSLISKFTANSLPEPARSQVRESLLNLPTNWFDSVHSTSLPHHASFHYANCEEQKVEQQQQQQQQQQQQQLLQQQLLQQQQQKRNKDGDDSASPSSSVTANGKVLILAKESLEMVRNVMGVVDSTLGKAEEWVKQKQEVKEMIRERFLQQQQQYRQQQQKDGNYVKPSQDNVDSKD</sequence>
<gene>
    <name type="primary">OPI1</name>
    <name type="ordered locus">YHL020C</name>
</gene>
<feature type="chain" id="PRO_0000058061" description="Transcriptional repressor OPI1">
    <location>
        <begin position="1"/>
        <end position="404"/>
    </location>
</feature>
<feature type="region of interest" description="Disordered" evidence="1">
    <location>
        <begin position="25"/>
        <end position="51"/>
    </location>
</feature>
<feature type="region of interest" description="Basic motif">
    <location>
        <begin position="109"/>
        <end position="138"/>
    </location>
</feature>
<feature type="region of interest" description="Leucine-zipper">
    <location>
        <begin position="139"/>
        <end position="160"/>
    </location>
</feature>
<feature type="region of interest" description="Disordered" evidence="1">
    <location>
        <begin position="170"/>
        <end position="201"/>
    </location>
</feature>
<feature type="region of interest" description="Disordered" evidence="1">
    <location>
        <begin position="305"/>
        <end position="327"/>
    </location>
</feature>
<feature type="region of interest" description="Disordered" evidence="1">
    <location>
        <begin position="378"/>
        <end position="404"/>
    </location>
</feature>
<feature type="short sequence motif" description="FFAT">
    <location>
        <begin position="200"/>
        <end position="206"/>
    </location>
</feature>
<feature type="compositionally biased region" description="Polar residues" evidence="1">
    <location>
        <begin position="26"/>
        <end position="37"/>
    </location>
</feature>
<feature type="compositionally biased region" description="Acidic residues" evidence="1">
    <location>
        <begin position="186"/>
        <end position="201"/>
    </location>
</feature>
<feature type="compositionally biased region" description="Low complexity" evidence="1">
    <location>
        <begin position="378"/>
        <end position="387"/>
    </location>
</feature>
<feature type="compositionally biased region" description="Polar residues" evidence="1">
    <location>
        <begin position="394"/>
        <end position="404"/>
    </location>
</feature>
<feature type="modified residue" description="Phosphoserine" evidence="6 7">
    <location>
        <position position="10"/>
    </location>
</feature>
<accession>P21957</accession>
<accession>D3DKP9</accession>
<dbReference type="EMBL" id="M57383">
    <property type="protein sequence ID" value="AAA34828.1"/>
    <property type="molecule type" value="Genomic_DNA"/>
</dbReference>
<dbReference type="EMBL" id="U11582">
    <property type="protein sequence ID" value="AAB65073.1"/>
    <property type="molecule type" value="Genomic_DNA"/>
</dbReference>
<dbReference type="EMBL" id="AY558103">
    <property type="protein sequence ID" value="AAS56429.1"/>
    <property type="molecule type" value="Genomic_DNA"/>
</dbReference>
<dbReference type="EMBL" id="BK006934">
    <property type="protein sequence ID" value="DAA06665.1"/>
    <property type="molecule type" value="Genomic_DNA"/>
</dbReference>
<dbReference type="PIR" id="S13741">
    <property type="entry name" value="S13741"/>
</dbReference>
<dbReference type="RefSeq" id="NP_011843.1">
    <property type="nucleotide sequence ID" value="NM_001179100.1"/>
</dbReference>
<dbReference type="SMR" id="P21957"/>
<dbReference type="BioGRID" id="36403">
    <property type="interactions" value="486"/>
</dbReference>
<dbReference type="DIP" id="DIP-5505N"/>
<dbReference type="ELM" id="P21957"/>
<dbReference type="FunCoup" id="P21957">
    <property type="interactions" value="410"/>
</dbReference>
<dbReference type="IntAct" id="P21957">
    <property type="interactions" value="8"/>
</dbReference>
<dbReference type="STRING" id="4932.YHL020C"/>
<dbReference type="iPTMnet" id="P21957"/>
<dbReference type="PaxDb" id="4932-YHL020C"/>
<dbReference type="PeptideAtlas" id="P21957"/>
<dbReference type="EnsemblFungi" id="YHL020C_mRNA">
    <property type="protein sequence ID" value="YHL020C"/>
    <property type="gene ID" value="YHL020C"/>
</dbReference>
<dbReference type="GeneID" id="856366"/>
<dbReference type="KEGG" id="sce:YHL020C"/>
<dbReference type="AGR" id="SGD:S000001012"/>
<dbReference type="SGD" id="S000001012">
    <property type="gene designation" value="OPI1"/>
</dbReference>
<dbReference type="VEuPathDB" id="FungiDB:YHL020C"/>
<dbReference type="eggNOG" id="ENOG502RG16">
    <property type="taxonomic scope" value="Eukaryota"/>
</dbReference>
<dbReference type="HOGENOM" id="CLU_039546_0_0_1"/>
<dbReference type="InParanoid" id="P21957"/>
<dbReference type="OMA" id="HYANCEE"/>
<dbReference type="OrthoDB" id="2441642at2759"/>
<dbReference type="BioCyc" id="YEAST:G3O-31040-MONOMER"/>
<dbReference type="BioGRID-ORCS" id="856366">
    <property type="hits" value="3 hits in 10 CRISPR screens"/>
</dbReference>
<dbReference type="PRO" id="PR:P21957"/>
<dbReference type="Proteomes" id="UP000002311">
    <property type="component" value="Chromosome VIII"/>
</dbReference>
<dbReference type="RNAct" id="P21957">
    <property type="molecule type" value="protein"/>
</dbReference>
<dbReference type="GO" id="GO:0005783">
    <property type="term" value="C:endoplasmic reticulum"/>
    <property type="evidence" value="ECO:0000314"/>
    <property type="project" value="SGD"/>
</dbReference>
<dbReference type="GO" id="GO:0005635">
    <property type="term" value="C:nuclear envelope"/>
    <property type="evidence" value="ECO:0000314"/>
    <property type="project" value="SGD"/>
</dbReference>
<dbReference type="GO" id="GO:0031965">
    <property type="term" value="C:nuclear membrane"/>
    <property type="evidence" value="ECO:0000314"/>
    <property type="project" value="SGD"/>
</dbReference>
<dbReference type="GO" id="GO:0034399">
    <property type="term" value="C:nuclear periphery"/>
    <property type="evidence" value="ECO:0007005"/>
    <property type="project" value="SGD"/>
</dbReference>
<dbReference type="GO" id="GO:0005654">
    <property type="term" value="C:nucleoplasm"/>
    <property type="evidence" value="ECO:0000314"/>
    <property type="project" value="SGD"/>
</dbReference>
<dbReference type="GO" id="GO:0005634">
    <property type="term" value="C:nucleus"/>
    <property type="evidence" value="ECO:0000314"/>
    <property type="project" value="SGD"/>
</dbReference>
<dbReference type="GO" id="GO:0003677">
    <property type="term" value="F:DNA binding"/>
    <property type="evidence" value="ECO:0007669"/>
    <property type="project" value="UniProtKB-KW"/>
</dbReference>
<dbReference type="GO" id="GO:0070300">
    <property type="term" value="F:phosphatidic acid binding"/>
    <property type="evidence" value="ECO:0000314"/>
    <property type="project" value="SGD"/>
</dbReference>
<dbReference type="GO" id="GO:0003714">
    <property type="term" value="F:transcription corepressor activity"/>
    <property type="evidence" value="ECO:0000353"/>
    <property type="project" value="SGD"/>
</dbReference>
<dbReference type="GO" id="GO:0016036">
    <property type="term" value="P:cellular response to phosphate starvation"/>
    <property type="evidence" value="ECO:0000314"/>
    <property type="project" value="SGD"/>
</dbReference>
<dbReference type="GO" id="GO:0030968">
    <property type="term" value="P:endoplasmic reticulum unfolded protein response"/>
    <property type="evidence" value="ECO:0000315"/>
    <property type="project" value="SGD"/>
</dbReference>
<dbReference type="GO" id="GO:0071072">
    <property type="term" value="P:negative regulation of phospholipid biosynthetic process"/>
    <property type="evidence" value="ECO:0000314"/>
    <property type="project" value="SGD"/>
</dbReference>
<dbReference type="GO" id="GO:0000122">
    <property type="term" value="P:negative regulation of transcription by RNA polymerase II"/>
    <property type="evidence" value="ECO:0000315"/>
    <property type="project" value="SGD"/>
</dbReference>
<dbReference type="GO" id="GO:0008654">
    <property type="term" value="P:phospholipid biosynthetic process"/>
    <property type="evidence" value="ECO:0000315"/>
    <property type="project" value="SGD"/>
</dbReference>
<dbReference type="GO" id="GO:0045944">
    <property type="term" value="P:positive regulation of transcription by RNA polymerase II"/>
    <property type="evidence" value="ECO:0000315"/>
    <property type="project" value="SGD"/>
</dbReference>
<dbReference type="GO" id="GO:0006357">
    <property type="term" value="P:regulation of transcription by RNA polymerase II"/>
    <property type="evidence" value="ECO:0000318"/>
    <property type="project" value="GO_Central"/>
</dbReference>
<dbReference type="InterPro" id="IPR013927">
    <property type="entry name" value="TF_Opi1_Ccg-8"/>
</dbReference>
<dbReference type="PANTHER" id="PTHR38406">
    <property type="entry name" value="TRANSCRIPTIONAL REPRESSOR OPI1"/>
    <property type="match status" value="1"/>
</dbReference>
<dbReference type="PANTHER" id="PTHR38406:SF1">
    <property type="entry name" value="TRANSCRIPTIONAL REPRESSOR OPI1"/>
    <property type="match status" value="1"/>
</dbReference>
<dbReference type="Pfam" id="PF08618">
    <property type="entry name" value="Opi1"/>
    <property type="match status" value="1"/>
</dbReference>